<feature type="chain" id="PRO_1000165186" description="Type III pantothenate kinase">
    <location>
        <begin position="1"/>
        <end position="262"/>
    </location>
</feature>
<feature type="active site" description="Proton acceptor" evidence="1">
    <location>
        <position position="109"/>
    </location>
</feature>
<feature type="binding site" evidence="1">
    <location>
        <begin position="6"/>
        <end position="13"/>
    </location>
    <ligand>
        <name>ATP</name>
        <dbReference type="ChEBI" id="CHEBI:30616"/>
    </ligand>
</feature>
<feature type="binding site" evidence="1">
    <location>
        <position position="100"/>
    </location>
    <ligand>
        <name>substrate</name>
    </ligand>
</feature>
<feature type="binding site" evidence="1">
    <location>
        <begin position="107"/>
        <end position="110"/>
    </location>
    <ligand>
        <name>substrate</name>
    </ligand>
</feature>
<feature type="binding site" evidence="1">
    <location>
        <position position="129"/>
    </location>
    <ligand>
        <name>K(+)</name>
        <dbReference type="ChEBI" id="CHEBI:29103"/>
    </ligand>
</feature>
<feature type="binding site" evidence="1">
    <location>
        <position position="132"/>
    </location>
    <ligand>
        <name>ATP</name>
        <dbReference type="ChEBI" id="CHEBI:30616"/>
    </ligand>
</feature>
<feature type="binding site" evidence="1">
    <location>
        <position position="184"/>
    </location>
    <ligand>
        <name>substrate</name>
    </ligand>
</feature>
<proteinExistence type="inferred from homology"/>
<evidence type="ECO:0000255" key="1">
    <source>
        <dbReference type="HAMAP-Rule" id="MF_01274"/>
    </source>
</evidence>
<reference key="1">
    <citation type="submission" date="2008-10" db="EMBL/GenBank/DDBJ databases">
        <title>Genome sequence of Bacillus anthracis str. CDC 684.</title>
        <authorList>
            <person name="Dodson R.J."/>
            <person name="Munk A.C."/>
            <person name="Brettin T."/>
            <person name="Bruce D."/>
            <person name="Detter C."/>
            <person name="Tapia R."/>
            <person name="Han C."/>
            <person name="Sutton G."/>
            <person name="Sims D."/>
        </authorList>
    </citation>
    <scope>NUCLEOTIDE SEQUENCE [LARGE SCALE GENOMIC DNA]</scope>
    <source>
        <strain>CDC 684 / NRRL 3495</strain>
    </source>
</reference>
<comment type="function">
    <text evidence="1">Catalyzes the phosphorylation of pantothenate (Pan), the first step in CoA biosynthesis.</text>
</comment>
<comment type="catalytic activity">
    <reaction evidence="1">
        <text>(R)-pantothenate + ATP = (R)-4'-phosphopantothenate + ADP + H(+)</text>
        <dbReference type="Rhea" id="RHEA:16373"/>
        <dbReference type="ChEBI" id="CHEBI:10986"/>
        <dbReference type="ChEBI" id="CHEBI:15378"/>
        <dbReference type="ChEBI" id="CHEBI:29032"/>
        <dbReference type="ChEBI" id="CHEBI:30616"/>
        <dbReference type="ChEBI" id="CHEBI:456216"/>
        <dbReference type="EC" id="2.7.1.33"/>
    </reaction>
</comment>
<comment type="cofactor">
    <cofactor evidence="1">
        <name>NH4(+)</name>
        <dbReference type="ChEBI" id="CHEBI:28938"/>
    </cofactor>
    <cofactor evidence="1">
        <name>K(+)</name>
        <dbReference type="ChEBI" id="CHEBI:29103"/>
    </cofactor>
    <text evidence="1">A monovalent cation. Ammonium or potassium.</text>
</comment>
<comment type="pathway">
    <text evidence="1">Cofactor biosynthesis; coenzyme A biosynthesis; CoA from (R)-pantothenate: step 1/5.</text>
</comment>
<comment type="subunit">
    <text evidence="1">Homodimer.</text>
</comment>
<comment type="subcellular location">
    <subcellularLocation>
        <location evidence="1">Cytoplasm</location>
    </subcellularLocation>
</comment>
<comment type="similarity">
    <text evidence="1">Belongs to the type III pantothenate kinase family.</text>
</comment>
<keyword id="KW-0067">ATP-binding</keyword>
<keyword id="KW-0173">Coenzyme A biosynthesis</keyword>
<keyword id="KW-0963">Cytoplasm</keyword>
<keyword id="KW-0418">Kinase</keyword>
<keyword id="KW-0479">Metal-binding</keyword>
<keyword id="KW-0547">Nucleotide-binding</keyword>
<keyword id="KW-0630">Potassium</keyword>
<keyword id="KW-0808">Transferase</keyword>
<accession>C3LJ39</accession>
<name>COAX_BACAC</name>
<gene>
    <name evidence="1" type="primary">coaX</name>
    <name type="ordered locus">BAMEG_0078</name>
</gene>
<sequence>MIFVLDVGNTNAVLGVFEEGELRQHWRMETDRHKTEDEYGMLVKQLLEHEGLSFEDVKGIIVSSVVPPIMFALERMCEKYFKIKPLVVGPGIKTGLNIKYENPREVGADRIVNAVAGIHLYGSPLIIVDFGTATTYCYINEEKHYMGGVITPGIMISAEALYSRAAKLPRIEITKPSSVVGKNTVSAMQSGILYGYVGQVEGIVKRMKEEAKQEPKVIATGGLAKLISEESNVIDVVDPFLTLKGLYMLYERNANLQHEKGE</sequence>
<dbReference type="EC" id="2.7.1.33" evidence="1"/>
<dbReference type="EMBL" id="CP001215">
    <property type="protein sequence ID" value="ACP15974.1"/>
    <property type="molecule type" value="Genomic_DNA"/>
</dbReference>
<dbReference type="RefSeq" id="WP_000578367.1">
    <property type="nucleotide sequence ID" value="NC_012581.1"/>
</dbReference>
<dbReference type="SMR" id="C3LJ39"/>
<dbReference type="KEGG" id="bah:BAMEG_0078"/>
<dbReference type="HOGENOM" id="CLU_066627_1_0_9"/>
<dbReference type="UniPathway" id="UPA00241">
    <property type="reaction ID" value="UER00352"/>
</dbReference>
<dbReference type="GO" id="GO:0005737">
    <property type="term" value="C:cytoplasm"/>
    <property type="evidence" value="ECO:0007669"/>
    <property type="project" value="UniProtKB-SubCell"/>
</dbReference>
<dbReference type="GO" id="GO:0005524">
    <property type="term" value="F:ATP binding"/>
    <property type="evidence" value="ECO:0007669"/>
    <property type="project" value="UniProtKB-UniRule"/>
</dbReference>
<dbReference type="GO" id="GO:0046872">
    <property type="term" value="F:metal ion binding"/>
    <property type="evidence" value="ECO:0007669"/>
    <property type="project" value="UniProtKB-KW"/>
</dbReference>
<dbReference type="GO" id="GO:0004594">
    <property type="term" value="F:pantothenate kinase activity"/>
    <property type="evidence" value="ECO:0007669"/>
    <property type="project" value="UniProtKB-UniRule"/>
</dbReference>
<dbReference type="GO" id="GO:0015937">
    <property type="term" value="P:coenzyme A biosynthetic process"/>
    <property type="evidence" value="ECO:0007669"/>
    <property type="project" value="UniProtKB-UniRule"/>
</dbReference>
<dbReference type="CDD" id="cd24015">
    <property type="entry name" value="ASKHA_NBD_PanK-III"/>
    <property type="match status" value="1"/>
</dbReference>
<dbReference type="Gene3D" id="3.30.420.40">
    <property type="match status" value="2"/>
</dbReference>
<dbReference type="HAMAP" id="MF_01274">
    <property type="entry name" value="Pantothen_kinase_3"/>
    <property type="match status" value="1"/>
</dbReference>
<dbReference type="InterPro" id="IPR043129">
    <property type="entry name" value="ATPase_NBD"/>
</dbReference>
<dbReference type="InterPro" id="IPR004619">
    <property type="entry name" value="Type_III_PanK"/>
</dbReference>
<dbReference type="NCBIfam" id="TIGR00671">
    <property type="entry name" value="baf"/>
    <property type="match status" value="1"/>
</dbReference>
<dbReference type="NCBIfam" id="NF009843">
    <property type="entry name" value="PRK13318.1-1"/>
    <property type="match status" value="1"/>
</dbReference>
<dbReference type="NCBIfam" id="NF009847">
    <property type="entry name" value="PRK13318.1-5"/>
    <property type="match status" value="1"/>
</dbReference>
<dbReference type="NCBIfam" id="NF009848">
    <property type="entry name" value="PRK13318.1-6"/>
    <property type="match status" value="1"/>
</dbReference>
<dbReference type="NCBIfam" id="NF009855">
    <property type="entry name" value="PRK13321.1"/>
    <property type="match status" value="1"/>
</dbReference>
<dbReference type="PANTHER" id="PTHR34265">
    <property type="entry name" value="TYPE III PANTOTHENATE KINASE"/>
    <property type="match status" value="1"/>
</dbReference>
<dbReference type="PANTHER" id="PTHR34265:SF1">
    <property type="entry name" value="TYPE III PANTOTHENATE KINASE"/>
    <property type="match status" value="1"/>
</dbReference>
<dbReference type="Pfam" id="PF03309">
    <property type="entry name" value="Pan_kinase"/>
    <property type="match status" value="1"/>
</dbReference>
<dbReference type="SUPFAM" id="SSF53067">
    <property type="entry name" value="Actin-like ATPase domain"/>
    <property type="match status" value="2"/>
</dbReference>
<protein>
    <recommendedName>
        <fullName evidence="1">Type III pantothenate kinase</fullName>
        <ecNumber evidence="1">2.7.1.33</ecNumber>
    </recommendedName>
    <alternativeName>
        <fullName evidence="1">PanK-III</fullName>
    </alternativeName>
    <alternativeName>
        <fullName evidence="1">Pantothenic acid kinase</fullName>
    </alternativeName>
</protein>
<organism>
    <name type="scientific">Bacillus anthracis (strain CDC 684 / NRRL 3495)</name>
    <dbReference type="NCBI Taxonomy" id="568206"/>
    <lineage>
        <taxon>Bacteria</taxon>
        <taxon>Bacillati</taxon>
        <taxon>Bacillota</taxon>
        <taxon>Bacilli</taxon>
        <taxon>Bacillales</taxon>
        <taxon>Bacillaceae</taxon>
        <taxon>Bacillus</taxon>
        <taxon>Bacillus cereus group</taxon>
    </lineage>
</organism>